<feature type="chain" id="PRO_0000369685" description="Ribosomal RNA small subunit methyltransferase C">
    <location>
        <begin position="1"/>
        <end position="342"/>
    </location>
</feature>
<keyword id="KW-0963">Cytoplasm</keyword>
<keyword id="KW-0489">Methyltransferase</keyword>
<keyword id="KW-1185">Reference proteome</keyword>
<keyword id="KW-0698">rRNA processing</keyword>
<keyword id="KW-0949">S-adenosyl-L-methionine</keyword>
<keyword id="KW-0808">Transferase</keyword>
<comment type="function">
    <text evidence="1">Specifically methylates the guanine in position 1207 of 16S rRNA in the 30S particle.</text>
</comment>
<comment type="catalytic activity">
    <reaction evidence="1">
        <text>guanosine(1207) in 16S rRNA + S-adenosyl-L-methionine = N(2)-methylguanosine(1207) in 16S rRNA + S-adenosyl-L-homocysteine + H(+)</text>
        <dbReference type="Rhea" id="RHEA:42736"/>
        <dbReference type="Rhea" id="RHEA-COMP:10213"/>
        <dbReference type="Rhea" id="RHEA-COMP:10214"/>
        <dbReference type="ChEBI" id="CHEBI:15378"/>
        <dbReference type="ChEBI" id="CHEBI:57856"/>
        <dbReference type="ChEBI" id="CHEBI:59789"/>
        <dbReference type="ChEBI" id="CHEBI:74269"/>
        <dbReference type="ChEBI" id="CHEBI:74481"/>
        <dbReference type="EC" id="2.1.1.172"/>
    </reaction>
</comment>
<comment type="subunit">
    <text evidence="1">Monomer.</text>
</comment>
<comment type="subcellular location">
    <subcellularLocation>
        <location evidence="1">Cytoplasm</location>
    </subcellularLocation>
</comment>
<comment type="similarity">
    <text evidence="1">Belongs to the methyltransferase superfamily. RsmC family.</text>
</comment>
<evidence type="ECO:0000255" key="1">
    <source>
        <dbReference type="HAMAP-Rule" id="MF_01862"/>
    </source>
</evidence>
<reference key="1">
    <citation type="journal article" date="2006" name="J. Bacteriol.">
        <title>Genome sequence of Aeromonas hydrophila ATCC 7966T: jack of all trades.</title>
        <authorList>
            <person name="Seshadri R."/>
            <person name="Joseph S.W."/>
            <person name="Chopra A.K."/>
            <person name="Sha J."/>
            <person name="Shaw J."/>
            <person name="Graf J."/>
            <person name="Haft D.H."/>
            <person name="Wu M."/>
            <person name="Ren Q."/>
            <person name="Rosovitz M.J."/>
            <person name="Madupu R."/>
            <person name="Tallon L."/>
            <person name="Kim M."/>
            <person name="Jin S."/>
            <person name="Vuong H."/>
            <person name="Stine O.C."/>
            <person name="Ali A."/>
            <person name="Horneman A.J."/>
            <person name="Heidelberg J.F."/>
        </authorList>
    </citation>
    <scope>NUCLEOTIDE SEQUENCE [LARGE SCALE GENOMIC DNA]</scope>
    <source>
        <strain>ATCC 7966 / DSM 30187 / BCRC 13018 / CCUG 14551 / JCM 1027 / KCTC 2358 / NCIMB 9240 / NCTC 8049</strain>
    </source>
</reference>
<gene>
    <name evidence="1" type="primary">rsmC</name>
    <name type="ordered locus">AHA_3802</name>
</gene>
<name>RSMC_AERHH</name>
<organism>
    <name type="scientific">Aeromonas hydrophila subsp. hydrophila (strain ATCC 7966 / DSM 30187 / BCRC 13018 / CCUG 14551 / JCM 1027 / KCTC 2358 / NCIMB 9240 / NCTC 8049)</name>
    <dbReference type="NCBI Taxonomy" id="380703"/>
    <lineage>
        <taxon>Bacteria</taxon>
        <taxon>Pseudomonadati</taxon>
        <taxon>Pseudomonadota</taxon>
        <taxon>Gammaproteobacteria</taxon>
        <taxon>Aeromonadales</taxon>
        <taxon>Aeromonadaceae</taxon>
        <taxon>Aeromonas</taxon>
    </lineage>
</organism>
<protein>
    <recommendedName>
        <fullName evidence="1">Ribosomal RNA small subunit methyltransferase C</fullName>
        <ecNumber evidence="1">2.1.1.172</ecNumber>
    </recommendedName>
    <alternativeName>
        <fullName evidence="1">16S rRNA m2G1207 methyltransferase</fullName>
    </alternativeName>
    <alternativeName>
        <fullName evidence="1">rRNA (guanine-N(2)-)-methyltransferase RsmC</fullName>
    </alternativeName>
</protein>
<proteinExistence type="inferred from homology"/>
<accession>A0KPP9</accession>
<sequence>MSSPISAVSQMLERNQALFVGKRLLVCGALEDDYPRQLATLTHSLTVFTTDYCYYRSQQAALGDAILFDHQLGGAPRFDALLLLMPKAKAEAQYLLAMMTPLLEAGAELFLAGENRGGINGADKLLAPYGDKPVKRDSARRCSLYHGELSKPVEPFELDSWFGRYQCQAGDTELTVLALPGVFSASELDLGSQMLLASLPAMQGSLLDFGCGAGVIGSVLAKRNPGLKVTMVDINALALESSRRTLAINGLQGEVWASDVYSDIQGKFGRIVSNPPFHAGLKTFYAATETFLAKAPDHLQSQGSLTIVANAFLRYQPILETHFKRTEVISSDAKFKVYLSKV</sequence>
<dbReference type="EC" id="2.1.1.172" evidence="1"/>
<dbReference type="EMBL" id="CP000462">
    <property type="protein sequence ID" value="ABK38406.1"/>
    <property type="molecule type" value="Genomic_DNA"/>
</dbReference>
<dbReference type="RefSeq" id="WP_011707512.1">
    <property type="nucleotide sequence ID" value="NC_008570.1"/>
</dbReference>
<dbReference type="RefSeq" id="YP_858250.1">
    <property type="nucleotide sequence ID" value="NC_008570.1"/>
</dbReference>
<dbReference type="SMR" id="A0KPP9"/>
<dbReference type="STRING" id="380703.AHA_3802"/>
<dbReference type="EnsemblBacteria" id="ABK38406">
    <property type="protein sequence ID" value="ABK38406"/>
    <property type="gene ID" value="AHA_3802"/>
</dbReference>
<dbReference type="GeneID" id="4489129"/>
<dbReference type="KEGG" id="aha:AHA_3802"/>
<dbReference type="PATRIC" id="fig|380703.7.peg.3778"/>
<dbReference type="eggNOG" id="COG2813">
    <property type="taxonomic scope" value="Bacteria"/>
</dbReference>
<dbReference type="HOGENOM" id="CLU_049581_0_1_6"/>
<dbReference type="OrthoDB" id="9816072at2"/>
<dbReference type="Proteomes" id="UP000000756">
    <property type="component" value="Chromosome"/>
</dbReference>
<dbReference type="GO" id="GO:0005737">
    <property type="term" value="C:cytoplasm"/>
    <property type="evidence" value="ECO:0007669"/>
    <property type="project" value="UniProtKB-SubCell"/>
</dbReference>
<dbReference type="GO" id="GO:0052914">
    <property type="term" value="F:16S rRNA (guanine(1207)-N(2))-methyltransferase activity"/>
    <property type="evidence" value="ECO:0007669"/>
    <property type="project" value="UniProtKB-EC"/>
</dbReference>
<dbReference type="GO" id="GO:0003676">
    <property type="term" value="F:nucleic acid binding"/>
    <property type="evidence" value="ECO:0007669"/>
    <property type="project" value="InterPro"/>
</dbReference>
<dbReference type="CDD" id="cd02440">
    <property type="entry name" value="AdoMet_MTases"/>
    <property type="match status" value="1"/>
</dbReference>
<dbReference type="Gene3D" id="3.40.50.150">
    <property type="entry name" value="Vaccinia Virus protein VP39"/>
    <property type="match status" value="2"/>
</dbReference>
<dbReference type="HAMAP" id="MF_01862">
    <property type="entry name" value="16SrRNA_methyltr_C"/>
    <property type="match status" value="1"/>
</dbReference>
<dbReference type="InterPro" id="IPR002052">
    <property type="entry name" value="DNA_methylase_N6_adenine_CS"/>
</dbReference>
<dbReference type="InterPro" id="IPR013675">
    <property type="entry name" value="Mtase_sm_N"/>
</dbReference>
<dbReference type="InterPro" id="IPR023543">
    <property type="entry name" value="rRNA_ssu_MeTfrase_C"/>
</dbReference>
<dbReference type="InterPro" id="IPR046977">
    <property type="entry name" value="RsmC/RlmG"/>
</dbReference>
<dbReference type="InterPro" id="IPR029063">
    <property type="entry name" value="SAM-dependent_MTases_sf"/>
</dbReference>
<dbReference type="InterPro" id="IPR007848">
    <property type="entry name" value="Small_mtfrase_dom"/>
</dbReference>
<dbReference type="NCBIfam" id="NF007023">
    <property type="entry name" value="PRK09489.1"/>
    <property type="match status" value="1"/>
</dbReference>
<dbReference type="PANTHER" id="PTHR47816">
    <property type="entry name" value="RIBOSOMAL RNA SMALL SUBUNIT METHYLTRANSFERASE C"/>
    <property type="match status" value="1"/>
</dbReference>
<dbReference type="PANTHER" id="PTHR47816:SF4">
    <property type="entry name" value="RIBOSOMAL RNA SMALL SUBUNIT METHYLTRANSFERASE C"/>
    <property type="match status" value="1"/>
</dbReference>
<dbReference type="Pfam" id="PF05175">
    <property type="entry name" value="MTS"/>
    <property type="match status" value="1"/>
</dbReference>
<dbReference type="Pfam" id="PF08468">
    <property type="entry name" value="MTS_N"/>
    <property type="match status" value="1"/>
</dbReference>
<dbReference type="SUPFAM" id="SSF53335">
    <property type="entry name" value="S-adenosyl-L-methionine-dependent methyltransferases"/>
    <property type="match status" value="1"/>
</dbReference>